<reference key="1">
    <citation type="journal article" date="2009" name="PLoS Genet.">
        <title>Organised genome dynamics in the Escherichia coli species results in highly diverse adaptive paths.</title>
        <authorList>
            <person name="Touchon M."/>
            <person name="Hoede C."/>
            <person name="Tenaillon O."/>
            <person name="Barbe V."/>
            <person name="Baeriswyl S."/>
            <person name="Bidet P."/>
            <person name="Bingen E."/>
            <person name="Bonacorsi S."/>
            <person name="Bouchier C."/>
            <person name="Bouvet O."/>
            <person name="Calteau A."/>
            <person name="Chiapello H."/>
            <person name="Clermont O."/>
            <person name="Cruveiller S."/>
            <person name="Danchin A."/>
            <person name="Diard M."/>
            <person name="Dossat C."/>
            <person name="Karoui M.E."/>
            <person name="Frapy E."/>
            <person name="Garry L."/>
            <person name="Ghigo J.M."/>
            <person name="Gilles A.M."/>
            <person name="Johnson J."/>
            <person name="Le Bouguenec C."/>
            <person name="Lescat M."/>
            <person name="Mangenot S."/>
            <person name="Martinez-Jehanne V."/>
            <person name="Matic I."/>
            <person name="Nassif X."/>
            <person name="Oztas S."/>
            <person name="Petit M.A."/>
            <person name="Pichon C."/>
            <person name="Rouy Z."/>
            <person name="Ruf C.S."/>
            <person name="Schneider D."/>
            <person name="Tourret J."/>
            <person name="Vacherie B."/>
            <person name="Vallenet D."/>
            <person name="Medigue C."/>
            <person name="Rocha E.P.C."/>
            <person name="Denamur E."/>
        </authorList>
    </citation>
    <scope>NUCLEOTIDE SEQUENCE [LARGE SCALE GENOMIC DNA]</scope>
    <source>
        <strain>ED1a</strain>
    </source>
</reference>
<protein>
    <recommendedName>
        <fullName evidence="1">Pyrimidine monooxygenase RutA</fullName>
        <ecNumber evidence="1">1.14.99.46</ecNumber>
    </recommendedName>
</protein>
<comment type="function">
    <text evidence="1">Catalyzes the pyrimidine ring opening between N-3 and C-4 by an unusual flavin hydroperoxide-catalyzed mechanism, adding oxygen atoms in the process to yield ureidoacrylate peracid, that immediately reacts with FMN forming ureidoacrylate and FMN-N(5)-oxide. The FMN-N(5)-oxide reacts spontaneously with NADH to produce FMN. Requires the flavin reductase RutF to regenerate FMN in vivo.</text>
</comment>
<comment type="catalytic activity">
    <reaction evidence="1">
        <text>uracil + FMNH2 + NADH + O2 = (Z)-3-ureidoacrylate + FMN + NAD(+) + H2O + H(+)</text>
        <dbReference type="Rhea" id="RHEA:31587"/>
        <dbReference type="ChEBI" id="CHEBI:15377"/>
        <dbReference type="ChEBI" id="CHEBI:15378"/>
        <dbReference type="ChEBI" id="CHEBI:15379"/>
        <dbReference type="ChEBI" id="CHEBI:17568"/>
        <dbReference type="ChEBI" id="CHEBI:57540"/>
        <dbReference type="ChEBI" id="CHEBI:57618"/>
        <dbReference type="ChEBI" id="CHEBI:57945"/>
        <dbReference type="ChEBI" id="CHEBI:58210"/>
        <dbReference type="ChEBI" id="CHEBI:59891"/>
        <dbReference type="EC" id="1.14.99.46"/>
    </reaction>
</comment>
<comment type="catalytic activity">
    <reaction evidence="1">
        <text>thymine + FMNH2 + NADH + O2 = (Z)-2-methylureidoacrylate + FMN + NAD(+) + H2O + H(+)</text>
        <dbReference type="Rhea" id="RHEA:31599"/>
        <dbReference type="ChEBI" id="CHEBI:15377"/>
        <dbReference type="ChEBI" id="CHEBI:15378"/>
        <dbReference type="ChEBI" id="CHEBI:15379"/>
        <dbReference type="ChEBI" id="CHEBI:17821"/>
        <dbReference type="ChEBI" id="CHEBI:57540"/>
        <dbReference type="ChEBI" id="CHEBI:57618"/>
        <dbReference type="ChEBI" id="CHEBI:57945"/>
        <dbReference type="ChEBI" id="CHEBI:58210"/>
        <dbReference type="ChEBI" id="CHEBI:143783"/>
        <dbReference type="EC" id="1.14.99.46"/>
    </reaction>
</comment>
<comment type="induction">
    <text evidence="1">Up-regulated by the nitrogen regulatory protein C (NtrC also called GlnG) and repressed by RutR.</text>
</comment>
<comment type="similarity">
    <text evidence="1">Belongs to the NtaA/SnaA/DszA monooxygenase family. RutA subfamily.</text>
</comment>
<accession>B7MTF5</accession>
<dbReference type="EC" id="1.14.99.46" evidence="1"/>
<dbReference type="EMBL" id="CU928162">
    <property type="protein sequence ID" value="CAR07369.1"/>
    <property type="molecule type" value="Genomic_DNA"/>
</dbReference>
<dbReference type="SMR" id="B7MTF5"/>
<dbReference type="KEGG" id="ecq:ECED1_1168"/>
<dbReference type="HOGENOM" id="CLU_027853_1_1_6"/>
<dbReference type="Proteomes" id="UP000000748">
    <property type="component" value="Chromosome"/>
</dbReference>
<dbReference type="GO" id="GO:0008726">
    <property type="term" value="F:alkanesulfonate monooxygenase activity"/>
    <property type="evidence" value="ECO:0007669"/>
    <property type="project" value="TreeGrafter"/>
</dbReference>
<dbReference type="GO" id="GO:0052614">
    <property type="term" value="F:uracil oxygenase activity"/>
    <property type="evidence" value="ECO:0007669"/>
    <property type="project" value="UniProtKB-EC"/>
</dbReference>
<dbReference type="GO" id="GO:0046306">
    <property type="term" value="P:alkanesulfonate catabolic process"/>
    <property type="evidence" value="ECO:0007669"/>
    <property type="project" value="TreeGrafter"/>
</dbReference>
<dbReference type="GO" id="GO:0019740">
    <property type="term" value="P:nitrogen utilization"/>
    <property type="evidence" value="ECO:0007669"/>
    <property type="project" value="UniProtKB-UniRule"/>
</dbReference>
<dbReference type="GO" id="GO:0006212">
    <property type="term" value="P:uracil catabolic process"/>
    <property type="evidence" value="ECO:0007669"/>
    <property type="project" value="UniProtKB-UniRule"/>
</dbReference>
<dbReference type="CDD" id="cd01094">
    <property type="entry name" value="Alkanesulfonate_monoxygenase"/>
    <property type="match status" value="1"/>
</dbReference>
<dbReference type="FunFam" id="3.20.20.30:FF:000003">
    <property type="entry name" value="Pyrimidine monooxygenase RutA"/>
    <property type="match status" value="1"/>
</dbReference>
<dbReference type="Gene3D" id="3.20.20.30">
    <property type="entry name" value="Luciferase-like domain"/>
    <property type="match status" value="1"/>
</dbReference>
<dbReference type="HAMAP" id="MF_01699">
    <property type="entry name" value="RutA"/>
    <property type="match status" value="1"/>
</dbReference>
<dbReference type="InterPro" id="IPR011251">
    <property type="entry name" value="Luciferase-like_dom"/>
</dbReference>
<dbReference type="InterPro" id="IPR036661">
    <property type="entry name" value="Luciferase-like_sf"/>
</dbReference>
<dbReference type="InterPro" id="IPR019914">
    <property type="entry name" value="Pyrimidine_monooxygenase_RutA"/>
</dbReference>
<dbReference type="InterPro" id="IPR050172">
    <property type="entry name" value="SsuD_RutA_monooxygenase"/>
</dbReference>
<dbReference type="NCBIfam" id="TIGR03612">
    <property type="entry name" value="RutA"/>
    <property type="match status" value="1"/>
</dbReference>
<dbReference type="PANTHER" id="PTHR42847">
    <property type="entry name" value="ALKANESULFONATE MONOOXYGENASE"/>
    <property type="match status" value="1"/>
</dbReference>
<dbReference type="PANTHER" id="PTHR42847:SF4">
    <property type="entry name" value="ALKANESULFONATE MONOOXYGENASE-RELATED"/>
    <property type="match status" value="1"/>
</dbReference>
<dbReference type="Pfam" id="PF00296">
    <property type="entry name" value="Bac_luciferase"/>
    <property type="match status" value="1"/>
</dbReference>
<dbReference type="SUPFAM" id="SSF51679">
    <property type="entry name" value="Bacterial luciferase-like"/>
    <property type="match status" value="1"/>
</dbReference>
<evidence type="ECO:0000255" key="1">
    <source>
        <dbReference type="HAMAP-Rule" id="MF_01699"/>
    </source>
</evidence>
<gene>
    <name evidence="1" type="primary">rutA</name>
    <name type="ordered locus">ECED1_1168</name>
</gene>
<organism>
    <name type="scientific">Escherichia coli O81 (strain ED1a)</name>
    <dbReference type="NCBI Taxonomy" id="585397"/>
    <lineage>
        <taxon>Bacteria</taxon>
        <taxon>Pseudomonadati</taxon>
        <taxon>Pseudomonadota</taxon>
        <taxon>Gammaproteobacteria</taxon>
        <taxon>Enterobacterales</taxon>
        <taxon>Enterobacteriaceae</taxon>
        <taxon>Escherichia</taxon>
    </lineage>
</organism>
<proteinExistence type="inferred from homology"/>
<name>RUTA_ECO81</name>
<feature type="chain" id="PRO_0000402622" description="Pyrimidine monooxygenase RutA">
    <location>
        <begin position="1"/>
        <end position="382"/>
    </location>
</feature>
<feature type="binding site" evidence="1">
    <location>
        <begin position="68"/>
        <end position="69"/>
    </location>
    <ligand>
        <name>FMN</name>
        <dbReference type="ChEBI" id="CHEBI:58210"/>
    </ligand>
</feature>
<feature type="binding site" evidence="1">
    <location>
        <position position="134"/>
    </location>
    <ligand>
        <name>FMN</name>
        <dbReference type="ChEBI" id="CHEBI:58210"/>
    </ligand>
</feature>
<feature type="binding site" evidence="1">
    <location>
        <position position="143"/>
    </location>
    <ligand>
        <name>FMN</name>
        <dbReference type="ChEBI" id="CHEBI:58210"/>
    </ligand>
</feature>
<feature type="binding site" evidence="1">
    <location>
        <begin position="159"/>
        <end position="160"/>
    </location>
    <ligand>
        <name>FMN</name>
        <dbReference type="ChEBI" id="CHEBI:58210"/>
    </ligand>
</feature>
<feature type="binding site" evidence="1">
    <location>
        <position position="209"/>
    </location>
    <ligand>
        <name>FMN</name>
        <dbReference type="ChEBI" id="CHEBI:58210"/>
    </ligand>
</feature>
<sequence length="382" mass="42277">MQDAAPRLTFTLRDEERLMMKIGVFVPIGNNGWLISTHAPQYMPTFELNKAIVQKAEHYHFDFALSMIKLRGFGGKTEFWDHNLESFTLMAGLAAVTSRIQIYATAATLTLPPAIVARMAATIDSISGGRFGVNLVTGWQKPEYEQMGIWPGDDYFSRRYDYLTEYVQVLRDLWGSGKSDFKGDFFTMDDCRVSPQPSVPMKVICAGQSDAGMAFSARYADFNFCFGKGVNTPTAFAPTAARMKQAAEQTGRDVGSYVLFMVIADETDDAARAKWEHYKAGADEEALSWLTEQSQKDTRSDTDTNVRQMADPTSAVNINMGTLVGSYASVARMLDEVASVPGAEGVLLTFDDFLSGIENFGERIQPLMQCRAHLPALTQEVA</sequence>
<keyword id="KW-0285">Flavoprotein</keyword>
<keyword id="KW-0288">FMN</keyword>
<keyword id="KW-0503">Monooxygenase</keyword>
<keyword id="KW-0521">NADP</keyword>
<keyword id="KW-0560">Oxidoreductase</keyword>